<feature type="chain" id="PRO_0000442581" description="Breast cancer type 1 susceptibility protein homolog" evidence="14">
    <location>
        <begin position="1"/>
        <end position="612"/>
    </location>
</feature>
<feature type="domain" description="BRCT 1" evidence="2">
    <location>
        <begin position="415"/>
        <end position="477"/>
    </location>
</feature>
<feature type="domain" description="BRCT 2" evidence="2">
    <location>
        <begin position="505"/>
        <end position="603"/>
    </location>
</feature>
<feature type="zinc finger region" description="RING-type" evidence="3">
    <location>
        <begin position="21"/>
        <end position="61"/>
    </location>
</feature>
<feature type="region of interest" description="Disordered" evidence="4">
    <location>
        <begin position="140"/>
        <end position="173"/>
    </location>
</feature>
<feature type="splice variant" id="VSP_059259" description="In isoform b." evidence="14">
    <location>
        <begin position="1"/>
        <end position="495"/>
    </location>
</feature>
<accession>B6VQ60</accession>
<accession>B6VQ61</accession>
<proteinExistence type="evidence at protein level"/>
<dbReference type="EC" id="2.3.2.27" evidence="6"/>
<dbReference type="EMBL" id="BX284603">
    <property type="protein sequence ID" value="CAR97812.1"/>
    <property type="molecule type" value="Genomic_DNA"/>
</dbReference>
<dbReference type="EMBL" id="BX284603">
    <property type="protein sequence ID" value="CAR97813.1"/>
    <property type="molecule type" value="Genomic_DNA"/>
</dbReference>
<dbReference type="RefSeq" id="NP_001254881.1">
    <property type="nucleotide sequence ID" value="NM_001267952.1"/>
</dbReference>
<dbReference type="RefSeq" id="NP_001254882.1">
    <molecule id="B6VQ60-2"/>
    <property type="nucleotide sequence ID" value="NM_001267953.3"/>
</dbReference>
<dbReference type="SMR" id="B6VQ60"/>
<dbReference type="ComplexPortal" id="CPX-375">
    <property type="entry name" value="brc-1/brd-1 E3 ubiquitin ligase complex"/>
</dbReference>
<dbReference type="FunCoup" id="B6VQ60">
    <property type="interactions" value="63"/>
</dbReference>
<dbReference type="IntAct" id="B6VQ60">
    <property type="interactions" value="1"/>
</dbReference>
<dbReference type="STRING" id="6239.C36A4.8a.1"/>
<dbReference type="PaxDb" id="6239-C36A4.8a"/>
<dbReference type="PeptideAtlas" id="B6VQ60"/>
<dbReference type="EnsemblMetazoa" id="C36A4.8a.1">
    <property type="protein sequence ID" value="C36A4.8a.1"/>
    <property type="gene ID" value="WBGene00000264"/>
</dbReference>
<dbReference type="EnsemblMetazoa" id="C36A4.8b.1">
    <molecule id="B6VQ60-2"/>
    <property type="protein sequence ID" value="C36A4.8b.1"/>
    <property type="gene ID" value="WBGene00000264"/>
</dbReference>
<dbReference type="GeneID" id="175499"/>
<dbReference type="KEGG" id="cel:CELE_C36A4.8"/>
<dbReference type="AGR" id="WB:WBGene00000264"/>
<dbReference type="CTD" id="175499"/>
<dbReference type="WormBase" id="C36A4.8a">
    <molecule id="B6VQ60-1"/>
    <property type="protein sequence ID" value="CE43190"/>
    <property type="gene ID" value="WBGene00000264"/>
    <property type="gene designation" value="brc-1"/>
</dbReference>
<dbReference type="WormBase" id="C36A4.8b">
    <molecule id="B6VQ60-2"/>
    <property type="protein sequence ID" value="CE43228"/>
    <property type="gene ID" value="WBGene00000264"/>
    <property type="gene designation" value="brc-1"/>
</dbReference>
<dbReference type="eggNOG" id="KOG4362">
    <property type="taxonomic scope" value="Eukaryota"/>
</dbReference>
<dbReference type="GeneTree" id="ENSGT00440000034289"/>
<dbReference type="HOGENOM" id="CLU_446355_0_0_1"/>
<dbReference type="InParanoid" id="B6VQ60"/>
<dbReference type="OMA" id="SHVWELP"/>
<dbReference type="OrthoDB" id="5790173at2759"/>
<dbReference type="Reactome" id="R-CEL-3108214">
    <property type="pathway name" value="SUMOylation of DNA damage response and repair proteins"/>
</dbReference>
<dbReference type="UniPathway" id="UPA00143"/>
<dbReference type="PRO" id="PR:B6VQ60"/>
<dbReference type="Proteomes" id="UP000001940">
    <property type="component" value="Chromosome III"/>
</dbReference>
<dbReference type="Bgee" id="WBGene00000264">
    <property type="expression patterns" value="Expressed in germ line (C elegans) and 4 other cell types or tissues"/>
</dbReference>
<dbReference type="GO" id="GO:0031436">
    <property type="term" value="C:BRCA1-BARD1 complex"/>
    <property type="evidence" value="ECO:0000314"/>
    <property type="project" value="WormBase"/>
</dbReference>
<dbReference type="GO" id="GO:0005694">
    <property type="term" value="C:chromosome"/>
    <property type="evidence" value="ECO:0007669"/>
    <property type="project" value="UniProtKB-SubCell"/>
</dbReference>
<dbReference type="GO" id="GO:0005737">
    <property type="term" value="C:cytoplasm"/>
    <property type="evidence" value="ECO:0007669"/>
    <property type="project" value="UniProtKB-SubCell"/>
</dbReference>
<dbReference type="GO" id="GO:0061630">
    <property type="term" value="F:ubiquitin protein ligase activity"/>
    <property type="evidence" value="ECO:0000314"/>
    <property type="project" value="WormBase"/>
</dbReference>
<dbReference type="GO" id="GO:0008270">
    <property type="term" value="F:zinc ion binding"/>
    <property type="evidence" value="ECO:0007669"/>
    <property type="project" value="UniProtKB-KW"/>
</dbReference>
<dbReference type="GO" id="GO:0006915">
    <property type="term" value="P:apoptotic process"/>
    <property type="evidence" value="ECO:0000315"/>
    <property type="project" value="WormBase"/>
</dbReference>
<dbReference type="GO" id="GO:0071479">
    <property type="term" value="P:cellular response to ionizing radiation"/>
    <property type="evidence" value="ECO:0000315"/>
    <property type="project" value="UniProtKB"/>
</dbReference>
<dbReference type="GO" id="GO:0006974">
    <property type="term" value="P:DNA damage response"/>
    <property type="evidence" value="ECO:0000315"/>
    <property type="project" value="WormBase"/>
</dbReference>
<dbReference type="GO" id="GO:0006281">
    <property type="term" value="P:DNA repair"/>
    <property type="evidence" value="ECO:0000315"/>
    <property type="project" value="WormBase"/>
</dbReference>
<dbReference type="GO" id="GO:0000724">
    <property type="term" value="P:double-strand break repair via homologous recombination"/>
    <property type="evidence" value="ECO:0000315"/>
    <property type="project" value="WormBase"/>
</dbReference>
<dbReference type="GO" id="GO:0009792">
    <property type="term" value="P:embryo development ending in birth or egg hatching"/>
    <property type="evidence" value="ECO:0000315"/>
    <property type="project" value="UniProtKB"/>
</dbReference>
<dbReference type="GO" id="GO:0051307">
    <property type="term" value="P:meiotic chromosome separation"/>
    <property type="evidence" value="ECO:0000315"/>
    <property type="project" value="WormBase"/>
</dbReference>
<dbReference type="GO" id="GO:0000070">
    <property type="term" value="P:mitotic sister chromatid segregation"/>
    <property type="evidence" value="ECO:0000316"/>
    <property type="project" value="UniProtKB"/>
</dbReference>
<dbReference type="GO" id="GO:0006289">
    <property type="term" value="P:nucleotide-excision repair"/>
    <property type="evidence" value="ECO:0000315"/>
    <property type="project" value="WormBase"/>
</dbReference>
<dbReference type="GO" id="GO:1905168">
    <property type="term" value="P:positive regulation of double-strand break repair via homologous recombination"/>
    <property type="evidence" value="ECO:0000269"/>
    <property type="project" value="ComplexPortal"/>
</dbReference>
<dbReference type="GO" id="GO:0016567">
    <property type="term" value="P:protein ubiquitination"/>
    <property type="evidence" value="ECO:0000314"/>
    <property type="project" value="WormBase"/>
</dbReference>
<dbReference type="FunFam" id="3.40.50.10190:FF:000214">
    <property type="entry name" value="Breast cancer type 1 susceptibility protein homolog"/>
    <property type="match status" value="1"/>
</dbReference>
<dbReference type="FunFam" id="3.30.40.10:FF:001025">
    <property type="entry name" value="Predicted protein"/>
    <property type="match status" value="1"/>
</dbReference>
<dbReference type="Gene3D" id="3.40.50.10190">
    <property type="entry name" value="BRCT domain"/>
    <property type="match status" value="2"/>
</dbReference>
<dbReference type="Gene3D" id="3.30.40.10">
    <property type="entry name" value="Zinc/RING finger domain, C3HC4 (zinc finger)"/>
    <property type="match status" value="1"/>
</dbReference>
<dbReference type="InterPro" id="IPR031099">
    <property type="entry name" value="BRCA1-associated"/>
</dbReference>
<dbReference type="InterPro" id="IPR001357">
    <property type="entry name" value="BRCT_dom"/>
</dbReference>
<dbReference type="InterPro" id="IPR036420">
    <property type="entry name" value="BRCT_dom_sf"/>
</dbReference>
<dbReference type="InterPro" id="IPR018957">
    <property type="entry name" value="Znf_C3HC4_RING-type"/>
</dbReference>
<dbReference type="InterPro" id="IPR001841">
    <property type="entry name" value="Znf_RING"/>
</dbReference>
<dbReference type="InterPro" id="IPR013083">
    <property type="entry name" value="Znf_RING/FYVE/PHD"/>
</dbReference>
<dbReference type="InterPro" id="IPR017907">
    <property type="entry name" value="Znf_RING_CS"/>
</dbReference>
<dbReference type="PANTHER" id="PTHR13763:SF0">
    <property type="entry name" value="BREAST CANCER TYPE 1 SUSCEPTIBILITY PROTEIN"/>
    <property type="match status" value="1"/>
</dbReference>
<dbReference type="PANTHER" id="PTHR13763">
    <property type="entry name" value="BREAST CANCER TYPE 1 SUSCEPTIBILITY PROTEIN BRCA1"/>
    <property type="match status" value="1"/>
</dbReference>
<dbReference type="Pfam" id="PF16589">
    <property type="entry name" value="BRCT_2"/>
    <property type="match status" value="1"/>
</dbReference>
<dbReference type="Pfam" id="PF00097">
    <property type="entry name" value="zf-C3HC4"/>
    <property type="match status" value="1"/>
</dbReference>
<dbReference type="SMART" id="SM00292">
    <property type="entry name" value="BRCT"/>
    <property type="match status" value="2"/>
</dbReference>
<dbReference type="SMART" id="SM00184">
    <property type="entry name" value="RING"/>
    <property type="match status" value="1"/>
</dbReference>
<dbReference type="SUPFAM" id="SSF52113">
    <property type="entry name" value="BRCT domain"/>
    <property type="match status" value="2"/>
</dbReference>
<dbReference type="SUPFAM" id="SSF57850">
    <property type="entry name" value="RING/U-box"/>
    <property type="match status" value="1"/>
</dbReference>
<dbReference type="PROSITE" id="PS50172">
    <property type="entry name" value="BRCT"/>
    <property type="match status" value="2"/>
</dbReference>
<dbReference type="PROSITE" id="PS00518">
    <property type="entry name" value="ZF_RING_1"/>
    <property type="match status" value="1"/>
</dbReference>
<dbReference type="PROSITE" id="PS50089">
    <property type="entry name" value="ZF_RING_2"/>
    <property type="match status" value="1"/>
</dbReference>
<gene>
    <name evidence="13 16" type="primary">brc-1</name>
    <name evidence="16" type="ORF">C36A4.8</name>
</gene>
<name>BRCA1_CAEEL</name>
<sequence>MADVALRITETVARLQKELKCGICCSTYKDPILSTCFHIFCRSCINACFERKRKVQCPICRSVLDKRSCRDTYQITMAVQNYLKLSEAFKKDIENMNTFKSLPPEKMFMESQMPLDITIIPENDGKRCAPDFAIPFLPVRRKRPSRPQPPSAFAEEPAEPVEPPEPATKQPVELQSRVFPLEKLKKDVETSTETYKISREELKNVDIEEYINTLRENSTEIDEIDALFQLMPTMRQFLRNNINQLMEKFHVAPPKKSEKPANRRVSFASSQDLENIKIMTASESLETPPEPIQKLAQKPEVFKSTQNLIDLNLNTAVKKPVVVASDDDEVVEDSEGELQIDEDDLANVTCATSSTTLDADRTPKAIQDDEDRIDDELSQVPKTIVCSRIHNDADEVVGLELLSDFYHKFLSNACRFAEDVNEHTTHLVMMNSEGRSISQKSTAYLYAIARKCVIVGRQWLVDCITTGLLLSEADYTITSCSSTIPVKIPPSIGSEMGWLRSRNDEHGKLFAGRRFMILRKFTMNPYFDYKQLIELVQQCGGEILSCYENLSPEKLYIIFSKHSKAIEESKNIENLYKCDVVTMEWVLDSISEYLILPTQPYKAVDSIGCLQD</sequence>
<protein>
    <recommendedName>
        <fullName evidence="1">Breast cancer type 1 susceptibility protein homolog</fullName>
        <ecNumber evidence="6">2.3.2.27</ecNumber>
    </recommendedName>
    <alternativeName>
        <fullName evidence="1">RING-type E3 ubiquitin transferase BRCA1</fullName>
    </alternativeName>
</protein>
<evidence type="ECO:0000250" key="1">
    <source>
        <dbReference type="UniProtKB" id="P38398"/>
    </source>
</evidence>
<evidence type="ECO:0000255" key="2">
    <source>
        <dbReference type="PROSITE-ProRule" id="PRU00033"/>
    </source>
</evidence>
<evidence type="ECO:0000255" key="3">
    <source>
        <dbReference type="PROSITE-ProRule" id="PRU00175"/>
    </source>
</evidence>
<evidence type="ECO:0000256" key="4">
    <source>
        <dbReference type="SAM" id="MobiDB-lite"/>
    </source>
</evidence>
<evidence type="ECO:0000269" key="5">
    <source>
    </source>
</evidence>
<evidence type="ECO:0000269" key="6">
    <source>
    </source>
</evidence>
<evidence type="ECO:0000269" key="7">
    <source>
    </source>
</evidence>
<evidence type="ECO:0000269" key="8">
    <source>
    </source>
</evidence>
<evidence type="ECO:0000269" key="9">
    <source>
    </source>
</evidence>
<evidence type="ECO:0000269" key="10">
    <source>
    </source>
</evidence>
<evidence type="ECO:0000269" key="11">
    <source>
    </source>
</evidence>
<evidence type="ECO:0000269" key="12">
    <source>
    </source>
</evidence>
<evidence type="ECO:0000303" key="13">
    <source>
    </source>
</evidence>
<evidence type="ECO:0000305" key="14"/>
<evidence type="ECO:0000312" key="15">
    <source>
        <dbReference type="Proteomes" id="UP000001940"/>
    </source>
</evidence>
<evidence type="ECO:0000312" key="16">
    <source>
        <dbReference type="WormBase" id="C36A4.8a"/>
    </source>
</evidence>
<evidence type="ECO:0000312" key="17">
    <source>
        <dbReference type="WormBase" id="C36A4.8b"/>
    </source>
</evidence>
<organism evidence="15">
    <name type="scientific">Caenorhabditis elegans</name>
    <dbReference type="NCBI Taxonomy" id="6239"/>
    <lineage>
        <taxon>Eukaryota</taxon>
        <taxon>Metazoa</taxon>
        <taxon>Ecdysozoa</taxon>
        <taxon>Nematoda</taxon>
        <taxon>Chromadorea</taxon>
        <taxon>Rhabditida</taxon>
        <taxon>Rhabditina</taxon>
        <taxon>Rhabditomorpha</taxon>
        <taxon>Rhabditoidea</taxon>
        <taxon>Rhabditidae</taxon>
        <taxon>Peloderinae</taxon>
        <taxon>Caenorhabditis</taxon>
    </lineage>
</organism>
<comment type="function">
    <text evidence="5 6 7 8 9 10 11 12">E3 ubiquitin-protein ligase that specifically mediates the formation of polyubiquitin chains and plays a central role in DNA repair (PubMed:16628214). Plays a role in triggering cellular responses at damage sites in response to DNA damage that may be induced by UV and ionizing radiation for example (PubMed:14711411, PubMed:16628214, PubMed:24424777, PubMed:26903030, PubMed:30383754). Functions in double-strand break repair, and is required for homologous recombination between sister chromatids in meiotic and mitotic cells (PubMed:18219312, PubMed:19646877, PubMed:24424777, PubMed:26903030). In particular, protects against chromosome non-disjunction and nuclear fragmentation during meiotic double-strand break repair to ensure sister chromatid recombination and aid chromosome stability (PubMed:14711411, PubMed:18219312, PubMed:24424777). Required for normal cell cycle progression (PubMed:20207739). Along with brap-2 modulates the expression of cell cycle arrest protein cki-1 in response to increased levels of reactive oxygen species (PubMed:20207739). Constituent of the CeBCD complex that possesses E3 ubiquitin-protein ligase activity (PubMed:14711411). When bound to chromatin, the brc-1-brd-1 heterodimer within the CeBCD complex is inactive during normal conditions, but in response to DNA damage, the brc-1-brd-1 heterodimer associates with other proteins such as the recombinase rad-51 or the E2-ubiquitin-conjugating enzyme let-70, which activate the CeBCD complex as an E3-ubiquitin ligase (PubMed:16628214). Moreover, association between the brc-1-brd-1 heterodimer and rad-51 and let-70, probably requires DNA checkpoint proteins such as atl-1 and mre-11 in order to induce ubiquitination at DNA damage sites (PubMed:16628214). To this end, the brc-1-brd-1 heterodimer coordinates a diverse range of cellular pathways such as DNA damage repair, ubiquitination and transcriptional regulation to maintain genomic stability (PubMed:14711411).</text>
</comment>
<comment type="catalytic activity">
    <reaction evidence="6">
        <text>S-ubiquitinyl-[E2 ubiquitin-conjugating enzyme]-L-cysteine + [acceptor protein]-L-lysine = [E2 ubiquitin-conjugating enzyme]-L-cysteine + N(6)-ubiquitinyl-[acceptor protein]-L-lysine.</text>
        <dbReference type="EC" id="2.3.2.27"/>
    </reaction>
</comment>
<comment type="activity regulation">
    <text evidence="6">E3 ubiquitin-protein ligase activity of CeBCD complexes occurs at DNA damage sites. Following DNA damage, E3 ubiquitin-protein ligase activity is reduced by caffeine treatment (inhibitor of ATM and ATK kinase activity).</text>
</comment>
<comment type="pathway">
    <text evidence="6">Protein modification; protein ubiquitination.</text>
</comment>
<comment type="subunit">
    <text evidence="5 6 12">Heterodimer (via RING-type zinc finger) with brd-1 to form the core CeBCD complex (PubMed:14711411, PubMed:16628214). Brc-1-brd-1 heterodimer-containing CeBCD complexes bound to chromatin are activated as an E3-ubiquitin ligase in response to DNA damage (PubMed:16628214). The heterodimer interacts with the recombinase rad-51 following ionizing irradiation; the interaction is direct (PubMed:16628214). The heterodimer interacts the E2-ubiquitin-conjugating enzyme let-70 following ionizing irradiation (PubMed:16628214). The heterodimer interacts with the pro-crossover proteins msh-5 and syp-3 (PubMed:30383754).</text>
</comment>
<comment type="interaction">
    <interactant intactId="EBI-3895496">
        <id>B6VQ60</id>
    </interactant>
    <interactant intactId="EBI-3895480">
        <id>Q21209</id>
        <label>brd-1</label>
    </interactant>
    <organismsDiffer>false</organismsDiffer>
    <experiments>4</experiments>
</comment>
<comment type="subcellular location">
    <subcellularLocation>
        <location evidence="6 12">Nucleus</location>
    </subcellularLocation>
    <subcellularLocation>
        <location evidence="6 12">Chromosome</location>
    </subcellularLocation>
    <subcellularLocation>
        <location evidence="6">Cytoplasm</location>
    </subcellularLocation>
    <text evidence="6 12">Mainly localizes to the nucleus and a small proportion is chromatin bound (PubMed:30383754). Co-localizes with brd-1 in germline nuclei at meiotic prophase I (PubMed:30383754). At the transition between mid- and late- pachytene, localization together with brd-1 is less diffuse and becomes a linear pattern along the chromosomes (PubMed:30383754). In late pachytene nuclei, co-localizes with brd-1 and syp-1 at crossover sites and the short arm of the bivalent (PubMed:30383754). Co-localizes with the pro-crossover factors cosa-1, zhp-3 and msh-5 at crossover sites in mid-late pachytene nuclei (PubMed:30383754). Co-localizes with plk-2 in pachytene nuclei (PubMed:30383754). Localizes to DNA damage sites on chromatin following DNA damage.</text>
</comment>
<comment type="alternative products">
    <event type="alternative splicing"/>
    <isoform>
        <id>B6VQ60-1</id>
        <name evidence="16">a</name>
        <sequence type="displayed"/>
    </isoform>
    <isoform>
        <id>B6VQ60-2</id>
        <name evidence="17">b</name>
        <sequence type="described" ref="VSP_059259"/>
    </isoform>
</comment>
<comment type="PTM">
    <text evidence="6">Phosphorylation of CeBCD complexes is required for E3 ubiquitin-protein ligase activity.</text>
</comment>
<comment type="disruption phenotype">
    <text evidence="5 6 7 8 10 11 12">Animals are viable (PubMed:18219312, PubMed:19646877). However, there is defective double strand break repair (PubMed:18219312, PubMed:19646877, PubMed:26903030). During the early stages of meiosis, this is characterized by impaired homologous recombination in germ cells with increased apoptosis and increased numbers of rad-51-positive foci (PubMed:18219312, PubMed:19646877). Increased sensitivity to UV and IR irradiation and topoisomerase inhibitor camptothecin compared to wild-type (PubMed:24424777, PubMed:26903030). Following either IR irradiation or camptothecin treatment, there is reduced egg hatching (PubMed:26903030). Furthermore, there are also DNA damage repair defects following ionizing radiation and UV irradiation characterized by reduced ubiquitination at DNA damage sites and reduced rad-51-positive foci, respectively (PubMed:16628214, PubMed:24424777, PubMed:26903030). High levels of embryonic lethality and abolished brd-1 expression following DNA damage induced by ionising radiation (PubMed:30383754). Double knockout with brd-1 impairs rad-51 localization to DNA damage sites following DNA damage induced by ionising radiation (PubMed:30383754). RNAi-mediated knockdown results in high X chromosome non-disjunction leading to a high incidence of males (him) phenotype (PubMed:14711411). RNAi-mediated knockdown in addition to gamma-irradiation at the L4 stage of larval development, results in reduced progeny, increased cep-1/p53-dependent germ cell death, chromosome fragmentation and DNA repair defects (PubMed:14711411).</text>
</comment>
<reference evidence="15" key="1">
    <citation type="journal article" date="1998" name="Science">
        <title>Genome sequence of the nematode C. elegans: a platform for investigating biology.</title>
        <authorList>
            <consortium name="The C. elegans sequencing consortium"/>
        </authorList>
    </citation>
    <scope>NUCLEOTIDE SEQUENCE [LARGE SCALE GENOMIC DNA]</scope>
    <source>
        <strain evidence="15">Bristol N2</strain>
    </source>
</reference>
<reference evidence="14" key="2">
    <citation type="journal article" date="2004" name="Curr. Biol.">
        <title>BRCA1/BARD1 orthologs required for DNA repair in Caenorhabditis elegans.</title>
        <authorList>
            <person name="Boulton S.J."/>
            <person name="Martin J.S."/>
            <person name="Polanowska J."/>
            <person name="Hill D.E."/>
            <person name="Gartner A."/>
            <person name="Vidal M."/>
        </authorList>
    </citation>
    <scope>FUNCTION</scope>
    <scope>INTERACTION WITH BRD-1</scope>
    <scope>DISRUPTION PHENOTYPE</scope>
</reference>
<reference evidence="14" key="3">
    <citation type="journal article" date="2006" name="EMBO J.">
        <title>A conserved pathway to activate BRCA1-dependent ubiquitylation at DNA damage sites.</title>
        <authorList>
            <person name="Polanowska J."/>
            <person name="Martin J.S."/>
            <person name="Garcia-Muse T."/>
            <person name="Petalcorin M.I.R."/>
            <person name="Boulton S.J."/>
        </authorList>
    </citation>
    <scope>FUNCTION</scope>
    <scope>CATALYTIC ACTIVITY</scope>
    <scope>ACTIVITY REGULATION</scope>
    <scope>PATHWAY</scope>
    <scope>UBIQUITINATION</scope>
    <scope>IDENTIFICATION IN CEBCD COMPLEX WITH BRD-1; RAD-51 AND LET-70</scope>
    <scope>SUBUNIT</scope>
    <scope>SUBCELLULAR LOCATION</scope>
    <scope>PHOSPHORYLATION</scope>
    <scope>DISRUPTION PHENOTYPE</scope>
</reference>
<reference evidence="14" key="4">
    <citation type="journal article" date="2008" name="EMBO Rep.">
        <title>BRC-1 acts in the inter-sister pathway of meiotic double-strand break repair.</title>
        <authorList>
            <person name="Adamo A."/>
            <person name="Montemauri P."/>
            <person name="Silva N."/>
            <person name="Ward J.D."/>
            <person name="Boulton S.J."/>
            <person name="La Volpe A."/>
        </authorList>
    </citation>
    <scope>FUNCTION</scope>
    <scope>DISRUPTION PHENOTYPE</scope>
</reference>
<reference evidence="14" key="5">
    <citation type="journal article" date="2009" name="Curr. Biol.">
        <title>A robust network of double-strand break repair pathways governs genome integrity during C. elegans development.</title>
        <authorList>
            <person name="Pontier D.B."/>
            <person name="Tijsterman M."/>
        </authorList>
    </citation>
    <scope>FUNCTION</scope>
    <scope>DISRUPTION PHENOTYPE</scope>
</reference>
<reference evidence="14" key="6">
    <citation type="journal article" date="2010" name="J. Biol. Chem.">
        <title>Developmental arrest of Caenorhabditis elegans BRAP-2 mutant exposed to oxidative stress is dependent on BRC-1.</title>
        <authorList>
            <person name="Koon J.C."/>
            <person name="Kubiseski T.J."/>
        </authorList>
    </citation>
    <scope>FUNCTION</scope>
</reference>
<reference evidence="14" key="7">
    <citation type="journal article" date="2014" name="Genetics">
        <title>Loss of Caenorhabditis elegans BRCA1 promotes genome stability during replication in smc-5 mutants.</title>
        <authorList>
            <person name="Wolters S."/>
            <person name="Ermolaeva M.A."/>
            <person name="Bickel J.S."/>
            <person name="Fingerhut J.M."/>
            <person name="Khanikar J."/>
            <person name="Chan R.C."/>
            <person name="Schumacher B."/>
        </authorList>
    </citation>
    <scope>FUNCTION</scope>
    <scope>DISRUPTION PHENOTYPE</scope>
</reference>
<reference evidence="14" key="8">
    <citation type="journal article" date="2016" name="Mol. Cells">
        <title>DNA strand breaks in mitotic germ cells of Caenorhabditis elegans evaluated by comet assay.</title>
        <authorList>
            <person name="Park S."/>
            <person name="Choi S."/>
            <person name="Ahn B."/>
        </authorList>
    </citation>
    <scope>FUNCTION</scope>
    <scope>DISRUPTION PHENOTYPE</scope>
</reference>
<reference key="9">
    <citation type="journal article" date="2018" name="PLoS Genet.">
        <title>BRCA1-BARD1 associate with the synaptonemal complex and pro-crossover factors and influence RAD-51 dynamics during Caenorhabditis elegans meiosis.</title>
        <authorList>
            <person name="Janisiw E."/>
            <person name="Dello Stritto M.R."/>
            <person name="Jantsch V."/>
            <person name="Silva N."/>
        </authorList>
    </citation>
    <scope>FUNCTION</scope>
    <scope>INTERACTION WITH MSH-5 AND SYP-3</scope>
    <scope>SUBCELLULAR LOCATION</scope>
    <scope>DISRUPTION PHENOTYPE</scope>
</reference>
<keyword id="KW-0025">Alternative splicing</keyword>
<keyword id="KW-0131">Cell cycle</keyword>
<keyword id="KW-0158">Chromosome</keyword>
<keyword id="KW-0963">Cytoplasm</keyword>
<keyword id="KW-0227">DNA damage</keyword>
<keyword id="KW-0234">DNA repair</keyword>
<keyword id="KW-0479">Metal-binding</keyword>
<keyword id="KW-0539">Nucleus</keyword>
<keyword id="KW-1185">Reference proteome</keyword>
<keyword id="KW-0677">Repeat</keyword>
<keyword id="KW-0808">Transferase</keyword>
<keyword id="KW-0862">Zinc</keyword>
<keyword id="KW-0863">Zinc-finger</keyword>